<organism>
    <name type="scientific">Rattus norvegicus</name>
    <name type="common">Rat</name>
    <dbReference type="NCBI Taxonomy" id="10116"/>
    <lineage>
        <taxon>Eukaryota</taxon>
        <taxon>Metazoa</taxon>
        <taxon>Chordata</taxon>
        <taxon>Craniata</taxon>
        <taxon>Vertebrata</taxon>
        <taxon>Euteleostomi</taxon>
        <taxon>Mammalia</taxon>
        <taxon>Eutheria</taxon>
        <taxon>Euarchontoglires</taxon>
        <taxon>Glires</taxon>
        <taxon>Rodentia</taxon>
        <taxon>Myomorpha</taxon>
        <taxon>Muroidea</taxon>
        <taxon>Muridae</taxon>
        <taxon>Murinae</taxon>
        <taxon>Rattus</taxon>
    </lineage>
</organism>
<name>ODPA_RAT</name>
<protein>
    <recommendedName>
        <fullName>Pyruvate dehydrogenase E1 component subunit alpha, somatic form, mitochondrial</fullName>
        <ecNumber>1.2.4.1</ecNumber>
    </recommendedName>
    <alternativeName>
        <fullName>PDHE1-A type I</fullName>
    </alternativeName>
</protein>
<sequence length="390" mass="43227">MRKMLAAVSRVLAGAAQKPASRVLVASRNFANDATFEIKKCDLHRLEEGPPVTTVLTREDGLKYYRMMQTVRRMELKADQLYKQKIIRGFCHLCDGQEACCVGLEAGINPTDHLITAYRAHGFTFNRGHAVRAILAELTGRRGGCAKGKGGSMHMYAKNFYGGNGIVGAQVPLGAGIALACKYNGKDEVCLTLYGDGAANQGQIFEAYNMAALWKLPCIFICENNRYGMGTSVERAAASTDYYKRGDFIPGLRVDGMDILCVREATKFAAAYCRSGKGPILMELQTYRYHGHSMSDPGVSYRTREEIQEVRSKSDPIMLLKDRMVNSNLASVEELKEIDVEVRKEIEDAAQFATADPEPPLEELGYHIYSSDPPFEVRGANQWIKFKSVS</sequence>
<accession>P26284</accession>
<reference key="1">
    <citation type="journal article" date="1991" name="Biochim. Biophys. Acta">
        <title>The alpha-ketoacid dehydrogenase complexes. Sequence similarity of rat pyruvate dehydrogenase with Escherichia coli and Azotobacter vinelandii alpha-ketoglutarate dehydrogenase.</title>
        <authorList>
            <person name="Matuda S."/>
            <person name="Nakano K."/>
            <person name="Ohta S."/>
            <person name="Saheki T."/>
            <person name="Kawanishi Y."/>
            <person name="Miyata T."/>
        </authorList>
    </citation>
    <scope>NUCLEOTIDE SEQUENCE [MRNA]</scope>
</reference>
<reference key="2">
    <citation type="journal article" date="1994" name="J. Neurochem.">
        <title>The pyruvate dehydrogenase complex: cloning of the rat somatic E1 alpha subunit and its coordinate expression with the mRNAs for the E1 beta, E2, and E3 catalytic subunits in developing rat brain.</title>
        <authorList>
            <person name="Cullingford T.E."/>
            <person name="Clark J.B."/>
            <person name="Phillips I.R."/>
        </authorList>
    </citation>
    <scope>NUCLEOTIDE SEQUENCE [MRNA]</scope>
    <scope>TISSUE SPECIFICITY</scope>
    <source>
        <strain>Sprague-Dawley</strain>
        <tissue>Liver</tissue>
    </source>
</reference>
<reference key="3">
    <citation type="submission" date="2007-04" db="UniProtKB">
        <authorList>
            <person name="Lubec G."/>
            <person name="Diao W."/>
            <person name="Chen W.-Q."/>
        </authorList>
    </citation>
    <scope>PROTEIN SEQUENCE OF 133-141; 216-226; 245-253; 289-302 AND 324-343</scope>
    <scope>IDENTIFICATION BY MASS SPECTROMETRY</scope>
    <source>
        <strain>Sprague-Dawley</strain>
        <tissue>Hippocampus</tissue>
    </source>
</reference>
<reference key="4">
    <citation type="journal article" date="2009" name="Anal. Biochem.">
        <title>Monitoring phosphorylation of the pyruvate dehydrogenase complex.</title>
        <authorList>
            <person name="Rardin M.J."/>
            <person name="Wiley S.E."/>
            <person name="Naviaux R.K."/>
            <person name="Murphy A.N."/>
            <person name="Dixon J.E."/>
        </authorList>
    </citation>
    <scope>SUBCELLULAR LOCATION</scope>
    <scope>PHOSPHORYLATION AT SER-232; SER-293 AND SER-300</scope>
</reference>
<evidence type="ECO:0000250" key="1"/>
<evidence type="ECO:0000250" key="2">
    <source>
        <dbReference type="UniProtKB" id="P08559"/>
    </source>
</evidence>
<evidence type="ECO:0000250" key="3">
    <source>
        <dbReference type="UniProtKB" id="P35486"/>
    </source>
</evidence>
<evidence type="ECO:0000269" key="4">
    <source>
    </source>
</evidence>
<evidence type="ECO:0000269" key="5">
    <source>
    </source>
</evidence>
<evidence type="ECO:0000305" key="6"/>
<dbReference type="EC" id="1.2.4.1"/>
<dbReference type="EMBL" id="Z12158">
    <property type="protein sequence ID" value="CAA78146.1"/>
    <property type="molecule type" value="mRNA"/>
</dbReference>
<dbReference type="PIR" id="S15891">
    <property type="entry name" value="DERTPA"/>
</dbReference>
<dbReference type="PIR" id="S21553">
    <property type="entry name" value="DERTP1"/>
</dbReference>
<dbReference type="SMR" id="P26284"/>
<dbReference type="ComplexPortal" id="CPX-378">
    <property type="entry name" value="Pyruvate dehydrogenase E1 heterotetramer"/>
</dbReference>
<dbReference type="FunCoup" id="P26284">
    <property type="interactions" value="1269"/>
</dbReference>
<dbReference type="IntAct" id="P26284">
    <property type="interactions" value="1"/>
</dbReference>
<dbReference type="MINT" id="P26284"/>
<dbReference type="STRING" id="10116.ENSRNOP00000069789"/>
<dbReference type="ChEMBL" id="CHEMBL2176823"/>
<dbReference type="CarbonylDB" id="P26284"/>
<dbReference type="GlyGen" id="P26284">
    <property type="glycosylation" value="2 sites, 1 O-linked glycan (2 sites)"/>
</dbReference>
<dbReference type="iPTMnet" id="P26284"/>
<dbReference type="PhosphoSitePlus" id="P26284"/>
<dbReference type="jPOST" id="P26284"/>
<dbReference type="PaxDb" id="10116-ENSRNOP00000030279"/>
<dbReference type="AGR" id="RGD:3286"/>
<dbReference type="RGD" id="3286">
    <property type="gene designation" value="Pdha1"/>
</dbReference>
<dbReference type="eggNOG" id="KOG0225">
    <property type="taxonomic scope" value="Eukaryota"/>
</dbReference>
<dbReference type="InParanoid" id="P26284"/>
<dbReference type="PhylomeDB" id="P26284"/>
<dbReference type="Reactome" id="R-RNO-204174">
    <property type="pathway name" value="Regulation of pyruvate dehydrogenase (PDH) complex"/>
</dbReference>
<dbReference type="Reactome" id="R-RNO-5362517">
    <property type="pathway name" value="Signaling by Retinoic Acid"/>
</dbReference>
<dbReference type="Reactome" id="R-RNO-9861559">
    <property type="pathway name" value="PDH complex synthesizes acetyl-CoA from PYR"/>
</dbReference>
<dbReference type="PRO" id="PR:P26284"/>
<dbReference type="Proteomes" id="UP000002494">
    <property type="component" value="Unplaced"/>
</dbReference>
<dbReference type="GO" id="GO:1902494">
    <property type="term" value="C:catalytic complex"/>
    <property type="evidence" value="ECO:0000266"/>
    <property type="project" value="RGD"/>
</dbReference>
<dbReference type="GO" id="GO:0005759">
    <property type="term" value="C:mitochondrial matrix"/>
    <property type="evidence" value="ECO:0007669"/>
    <property type="project" value="UniProtKB-SubCell"/>
</dbReference>
<dbReference type="GO" id="GO:0005739">
    <property type="term" value="C:mitochondrion"/>
    <property type="evidence" value="ECO:0000266"/>
    <property type="project" value="RGD"/>
</dbReference>
<dbReference type="GO" id="GO:0045254">
    <property type="term" value="C:pyruvate dehydrogenase complex"/>
    <property type="evidence" value="ECO:0000314"/>
    <property type="project" value="RGD"/>
</dbReference>
<dbReference type="GO" id="GO:0046872">
    <property type="term" value="F:metal ion binding"/>
    <property type="evidence" value="ECO:0007669"/>
    <property type="project" value="UniProtKB-KW"/>
</dbReference>
<dbReference type="GO" id="GO:0004739">
    <property type="term" value="F:pyruvate dehydrogenase (acetyl-transferring) activity"/>
    <property type="evidence" value="ECO:0000314"/>
    <property type="project" value="RGD"/>
</dbReference>
<dbReference type="GO" id="GO:0034604">
    <property type="term" value="F:pyruvate dehydrogenase (NAD+) activity"/>
    <property type="evidence" value="ECO:0000266"/>
    <property type="project" value="RGD"/>
</dbReference>
<dbReference type="GO" id="GO:0004738">
    <property type="term" value="F:pyruvate dehydrogenase activity"/>
    <property type="evidence" value="ECO:0000266"/>
    <property type="project" value="RGD"/>
</dbReference>
<dbReference type="GO" id="GO:0006006">
    <property type="term" value="P:glucose metabolic process"/>
    <property type="evidence" value="ECO:0007669"/>
    <property type="project" value="UniProtKB-KW"/>
</dbReference>
<dbReference type="GO" id="GO:0006086">
    <property type="term" value="P:pyruvate decarboxylation to acetyl-CoA"/>
    <property type="evidence" value="ECO:0000314"/>
    <property type="project" value="RGD"/>
</dbReference>
<dbReference type="GO" id="GO:0006099">
    <property type="term" value="P:tricarboxylic acid cycle"/>
    <property type="evidence" value="ECO:0007669"/>
    <property type="project" value="UniProtKB-KW"/>
</dbReference>
<dbReference type="CDD" id="cd02000">
    <property type="entry name" value="TPP_E1_PDC_ADC_BCADC"/>
    <property type="match status" value="1"/>
</dbReference>
<dbReference type="FunFam" id="3.40.50.970:FF:000020">
    <property type="entry name" value="Pyruvate dehydrogenase E1 component subunit alpha, mitochondrial"/>
    <property type="match status" value="1"/>
</dbReference>
<dbReference type="Gene3D" id="3.40.50.970">
    <property type="match status" value="1"/>
</dbReference>
<dbReference type="InterPro" id="IPR001017">
    <property type="entry name" value="DH_E1"/>
</dbReference>
<dbReference type="InterPro" id="IPR050642">
    <property type="entry name" value="PDH_E1_Alpha_Subunit"/>
</dbReference>
<dbReference type="InterPro" id="IPR017597">
    <property type="entry name" value="Pyrv_DH_E1_asu_subgrp-y"/>
</dbReference>
<dbReference type="InterPro" id="IPR029061">
    <property type="entry name" value="THDP-binding"/>
</dbReference>
<dbReference type="NCBIfam" id="TIGR03182">
    <property type="entry name" value="PDH_E1_alph_y"/>
    <property type="match status" value="1"/>
</dbReference>
<dbReference type="PANTHER" id="PTHR11516:SF51">
    <property type="entry name" value="PYRUVATE DEHYDROGENASE E1 COMPONENT SUBUNIT ALPHA, SOMATIC FORM, MITOCHONDRIAL"/>
    <property type="match status" value="1"/>
</dbReference>
<dbReference type="PANTHER" id="PTHR11516">
    <property type="entry name" value="PYRUVATE DEHYDROGENASE E1 COMPONENT, ALPHA SUBUNIT BACTERIAL AND ORGANELLAR"/>
    <property type="match status" value="1"/>
</dbReference>
<dbReference type="Pfam" id="PF00676">
    <property type="entry name" value="E1_dh"/>
    <property type="match status" value="1"/>
</dbReference>
<dbReference type="SUPFAM" id="SSF52518">
    <property type="entry name" value="Thiamin diphosphate-binding fold (THDP-binding)"/>
    <property type="match status" value="1"/>
</dbReference>
<feature type="transit peptide" description="Mitochondrion" evidence="1">
    <location>
        <begin position="1"/>
        <end position="29"/>
    </location>
</feature>
<feature type="chain" id="PRO_0000020445" description="Pyruvate dehydrogenase E1 component subunit alpha, somatic form, mitochondrial">
    <location>
        <begin position="30"/>
        <end position="390"/>
    </location>
</feature>
<feature type="binding site" evidence="2">
    <location>
        <position position="92"/>
    </location>
    <ligand>
        <name>pyruvate</name>
        <dbReference type="ChEBI" id="CHEBI:15361"/>
    </ligand>
</feature>
<feature type="binding site" evidence="2">
    <location>
        <position position="118"/>
    </location>
    <ligand>
        <name>pyruvate</name>
        <dbReference type="ChEBI" id="CHEBI:15361"/>
    </ligand>
</feature>
<feature type="binding site" evidence="2">
    <location>
        <position position="118"/>
    </location>
    <ligand>
        <name>thiamine diphosphate</name>
        <dbReference type="ChEBI" id="CHEBI:58937"/>
        <note>ligand shared with beta subunit</note>
    </ligand>
</feature>
<feature type="binding site" evidence="2">
    <location>
        <position position="119"/>
    </location>
    <ligand>
        <name>pyruvate</name>
        <dbReference type="ChEBI" id="CHEBI:15361"/>
    </ligand>
</feature>
<feature type="binding site" evidence="2">
    <location>
        <position position="119"/>
    </location>
    <ligand>
        <name>thiamine diphosphate</name>
        <dbReference type="ChEBI" id="CHEBI:58937"/>
        <note>ligand shared with beta subunit</note>
    </ligand>
</feature>
<feature type="binding site" evidence="2">
    <location>
        <position position="157"/>
    </location>
    <ligand>
        <name>pyruvate</name>
        <dbReference type="ChEBI" id="CHEBI:15361"/>
    </ligand>
</feature>
<feature type="binding site" evidence="2">
    <location>
        <position position="165"/>
    </location>
    <ligand>
        <name>pyruvate</name>
        <dbReference type="ChEBI" id="CHEBI:15361"/>
    </ligand>
</feature>
<feature type="binding site" evidence="2">
    <location>
        <position position="165"/>
    </location>
    <ligand>
        <name>thiamine diphosphate</name>
        <dbReference type="ChEBI" id="CHEBI:58937"/>
        <note>ligand shared with beta subunit</note>
    </ligand>
</feature>
<feature type="binding site" evidence="2">
    <location>
        <position position="167"/>
    </location>
    <ligand>
        <name>pyruvate</name>
        <dbReference type="ChEBI" id="CHEBI:15361"/>
    </ligand>
</feature>
<feature type="binding site" evidence="2">
    <location>
        <position position="167"/>
    </location>
    <ligand>
        <name>thiamine diphosphate</name>
        <dbReference type="ChEBI" id="CHEBI:58937"/>
        <note>ligand shared with beta subunit</note>
    </ligand>
</feature>
<feature type="binding site" evidence="2">
    <location>
        <position position="196"/>
    </location>
    <ligand>
        <name>Mg(2+)</name>
        <dbReference type="ChEBI" id="CHEBI:18420"/>
    </ligand>
</feature>
<feature type="binding site" evidence="2">
    <location>
        <position position="196"/>
    </location>
    <ligand>
        <name>pyruvate</name>
        <dbReference type="ChEBI" id="CHEBI:15361"/>
    </ligand>
</feature>
<feature type="binding site" evidence="2">
    <location>
        <position position="196"/>
    </location>
    <ligand>
        <name>thiamine diphosphate</name>
        <dbReference type="ChEBI" id="CHEBI:58937"/>
        <note>ligand shared with beta subunit</note>
    </ligand>
</feature>
<feature type="binding site" evidence="2">
    <location>
        <position position="197"/>
    </location>
    <ligand>
        <name>pyruvate</name>
        <dbReference type="ChEBI" id="CHEBI:15361"/>
    </ligand>
</feature>
<feature type="binding site" evidence="2">
    <location>
        <position position="197"/>
    </location>
    <ligand>
        <name>thiamine diphosphate</name>
        <dbReference type="ChEBI" id="CHEBI:58937"/>
        <note>ligand shared with beta subunit</note>
    </ligand>
</feature>
<feature type="binding site" evidence="2">
    <location>
        <position position="198"/>
    </location>
    <ligand>
        <name>pyruvate</name>
        <dbReference type="ChEBI" id="CHEBI:15361"/>
    </ligand>
</feature>
<feature type="binding site" evidence="2">
    <location>
        <position position="198"/>
    </location>
    <ligand>
        <name>thiamine diphosphate</name>
        <dbReference type="ChEBI" id="CHEBI:58937"/>
        <note>ligand shared with beta subunit</note>
    </ligand>
</feature>
<feature type="binding site" evidence="2">
    <location>
        <position position="225"/>
    </location>
    <ligand>
        <name>Mg(2+)</name>
        <dbReference type="ChEBI" id="CHEBI:18420"/>
    </ligand>
</feature>
<feature type="binding site" evidence="2">
    <location>
        <position position="225"/>
    </location>
    <ligand>
        <name>pyruvate</name>
        <dbReference type="ChEBI" id="CHEBI:15361"/>
    </ligand>
</feature>
<feature type="binding site" evidence="2">
    <location>
        <position position="225"/>
    </location>
    <ligand>
        <name>thiamine diphosphate</name>
        <dbReference type="ChEBI" id="CHEBI:58937"/>
        <note>ligand shared with beta subunit</note>
    </ligand>
</feature>
<feature type="binding site" evidence="2">
    <location>
        <position position="227"/>
    </location>
    <ligand>
        <name>Mg(2+)</name>
        <dbReference type="ChEBI" id="CHEBI:18420"/>
    </ligand>
</feature>
<feature type="binding site" evidence="2">
    <location>
        <position position="227"/>
    </location>
    <ligand>
        <name>pyruvate</name>
        <dbReference type="ChEBI" id="CHEBI:15361"/>
    </ligand>
</feature>
<feature type="binding site" evidence="2">
    <location>
        <position position="292"/>
    </location>
    <ligand>
        <name>thiamine diphosphate</name>
        <dbReference type="ChEBI" id="CHEBI:58937"/>
        <note>ligand shared with beta subunit</note>
    </ligand>
</feature>
<feature type="modified residue" description="N6-acetyllysine; alternate" evidence="3">
    <location>
        <position position="63"/>
    </location>
</feature>
<feature type="modified residue" description="N6-succinyllysine; alternate" evidence="3">
    <location>
        <position position="63"/>
    </location>
</feature>
<feature type="modified residue" description="Phosphoserine; by PDK1" evidence="4">
    <location>
        <position position="232"/>
    </location>
</feature>
<feature type="modified residue" description="N6-acetyllysine; alternate" evidence="3">
    <location>
        <position position="244"/>
    </location>
</feature>
<feature type="modified residue" description="N6-succinyllysine; alternate" evidence="3">
    <location>
        <position position="244"/>
    </location>
</feature>
<feature type="modified residue" description="N6-acetyllysine" evidence="3">
    <location>
        <position position="267"/>
    </location>
</feature>
<feature type="modified residue" description="N6-succinyllysine" evidence="3">
    <location>
        <position position="277"/>
    </location>
</feature>
<feature type="modified residue" description="Phosphoserine; by PDK1, PDK2, PDK3 and PDK4" evidence="4">
    <location>
        <position position="293"/>
    </location>
</feature>
<feature type="modified residue" description="Phosphoserine" evidence="3">
    <location>
        <position position="295"/>
    </location>
</feature>
<feature type="modified residue" description="Phosphoserine; by PDK1, PDK2, PDK3 and PDK4" evidence="4">
    <location>
        <position position="300"/>
    </location>
</feature>
<feature type="modified residue" description="Phosphotyrosine" evidence="3">
    <location>
        <position position="301"/>
    </location>
</feature>
<feature type="modified residue" description="N6-acetyllysine; alternate" evidence="3">
    <location>
        <position position="313"/>
    </location>
</feature>
<feature type="modified residue" description="N6-succinyllysine; alternate" evidence="3">
    <location>
        <position position="313"/>
    </location>
</feature>
<feature type="modified residue" description="N6-acetyllysine" evidence="2">
    <location>
        <position position="321"/>
    </location>
</feature>
<feature type="modified residue" description="N6-acetyllysine" evidence="3">
    <location>
        <position position="336"/>
    </location>
</feature>
<feature type="modified residue" description="N6-succinyllysine" evidence="3">
    <location>
        <position position="385"/>
    </location>
</feature>
<feature type="sequence conflict" description="In Ref. 2; CAA78146." evidence="6" ref="2">
    <original>R</original>
    <variation>H</variation>
    <location>
        <position position="10"/>
    </location>
</feature>
<feature type="sequence conflict" description="In Ref. 2; CAA78146." evidence="6" ref="2">
    <original>N</original>
    <variation>T</variation>
    <location>
        <position position="126"/>
    </location>
</feature>
<feature type="sequence conflict" description="In Ref. 2; CAA78146." evidence="6" ref="2">
    <original>HA</original>
    <variation>LP</variation>
    <location>
        <begin position="129"/>
        <end position="130"/>
    </location>
</feature>
<feature type="sequence conflict" description="In Ref. 1." evidence="6" ref="1">
    <original>I</original>
    <variation>V</variation>
    <location>
        <position position="134"/>
    </location>
</feature>
<comment type="function">
    <text evidence="1">The pyruvate dehydrogenase complex catalyzes the overall conversion of pyruvate to acetyl-CoA and CO(2), and thereby links the glycolytic pathway to the tricarboxylic cycle.</text>
</comment>
<comment type="catalytic activity">
    <reaction>
        <text>N(6)-[(R)-lipoyl]-L-lysyl-[protein] + pyruvate + H(+) = N(6)-[(R)-S(8)-acetyldihydrolipoyl]-L-lysyl-[protein] + CO2</text>
        <dbReference type="Rhea" id="RHEA:19189"/>
        <dbReference type="Rhea" id="RHEA-COMP:10474"/>
        <dbReference type="Rhea" id="RHEA-COMP:10478"/>
        <dbReference type="ChEBI" id="CHEBI:15361"/>
        <dbReference type="ChEBI" id="CHEBI:15378"/>
        <dbReference type="ChEBI" id="CHEBI:16526"/>
        <dbReference type="ChEBI" id="CHEBI:83099"/>
        <dbReference type="ChEBI" id="CHEBI:83111"/>
        <dbReference type="EC" id="1.2.4.1"/>
    </reaction>
</comment>
<comment type="cofactor">
    <cofactor evidence="2">
        <name>thiamine diphosphate</name>
        <dbReference type="ChEBI" id="CHEBI:58937"/>
    </cofactor>
    <cofactor evidence="2">
        <name>Mg(2+)</name>
        <dbReference type="ChEBI" id="CHEBI:18420"/>
    </cofactor>
</comment>
<comment type="activity regulation">
    <text evidence="1">Pyruvate dehydrogenase activity is inhibited by phosphorylation of PDHA1; it is reactivated by dephosphorylation.</text>
</comment>
<comment type="subunit">
    <text evidence="1">Heterotetramer of two PDHA1 and two PDHB subunits. The heterotetramer interacts with DLAT, and is part of the multimeric pyruvate dehydrogenase complex that contains multiple copies of pyruvate dehydrogenase (E1), dihydrolipoamide acetyltransferase (DLAT, E2) and lipoamide dehydrogenase (DLD, E3). These subunits are bound to an inner core composed of about 48 DLAT and 12 PDHX molecules (By similarity).</text>
</comment>
<comment type="subcellular location">
    <subcellularLocation>
        <location evidence="4">Mitochondrion matrix</location>
    </subcellularLocation>
</comment>
<comment type="tissue specificity">
    <text evidence="5">In all tissues, but in very low amount in testis.</text>
</comment>
<comment type="PTM">
    <text evidence="4">Phosphorylation at Ser-232, Ser-293 and Ser-300 by PDK family kinases inactivates the enzyme; for this phosphorylation at a single site is sufficient. Phosphorylation at Ser-293 interferes with access to active site, and thereby inactivates the enzyme. Dephosphorylation at all three sites, i.e. at Ser-232, Ser-293 and Ser-300, is required for reactivation.</text>
</comment>
<comment type="PTM">
    <text evidence="1">Acetylation alters the phosphorylation pattern. Deacetylated by SIRT3 (By similarity).</text>
</comment>
<proteinExistence type="evidence at protein level"/>
<keyword id="KW-0007">Acetylation</keyword>
<keyword id="KW-0119">Carbohydrate metabolism</keyword>
<keyword id="KW-0903">Direct protein sequencing</keyword>
<keyword id="KW-0313">Glucose metabolism</keyword>
<keyword id="KW-0460">Magnesium</keyword>
<keyword id="KW-0479">Metal-binding</keyword>
<keyword id="KW-0496">Mitochondrion</keyword>
<keyword id="KW-0560">Oxidoreductase</keyword>
<keyword id="KW-0597">Phosphoprotein</keyword>
<keyword id="KW-0670">Pyruvate</keyword>
<keyword id="KW-1185">Reference proteome</keyword>
<keyword id="KW-0786">Thiamine pyrophosphate</keyword>
<keyword id="KW-0809">Transit peptide</keyword>
<keyword id="KW-0816">Tricarboxylic acid cycle</keyword>
<gene>
    <name type="primary">Pdha1</name>
</gene>